<proteinExistence type="inferred from homology"/>
<accession>Q9KGL9</accession>
<evidence type="ECO:0000250" key="1"/>
<evidence type="ECO:0000255" key="2"/>
<evidence type="ECO:0000305" key="3"/>
<name>KTHY_HALH5</name>
<organism>
    <name type="scientific">Halalkalibacterium halodurans (strain ATCC BAA-125 / DSM 18197 / FERM 7344 / JCM 9153 / C-125)</name>
    <name type="common">Bacillus halodurans</name>
    <dbReference type="NCBI Taxonomy" id="272558"/>
    <lineage>
        <taxon>Bacteria</taxon>
        <taxon>Bacillati</taxon>
        <taxon>Bacillota</taxon>
        <taxon>Bacilli</taxon>
        <taxon>Bacillales</taxon>
        <taxon>Bacillaceae</taxon>
        <taxon>Halalkalibacterium (ex Joshi et al. 2022)</taxon>
    </lineage>
</organism>
<feature type="chain" id="PRO_0000155235" description="Thymidylate kinase">
    <location>
        <begin position="1"/>
        <end position="210"/>
    </location>
</feature>
<feature type="binding site" evidence="2">
    <location>
        <begin position="11"/>
        <end position="18"/>
    </location>
    <ligand>
        <name>ATP</name>
        <dbReference type="ChEBI" id="CHEBI:30616"/>
    </ligand>
</feature>
<sequence>MTKGCFITVEGGEGAGKTSALDAIEEMLRENGLSVVRTREPGGIPIAEQIRSIILDVDHTRMDPRTEALLYAAARRQHLVEKVLPALEAGHVVLCDRFIDSSLAYQGYARGIGFEDILAINEFAIEGRYPDLTLLFRVDPDVGLSRIHRDQSREQNRLDQEALTFHQKVKEGYERIVETYPERVVEIDANQSFDQVVADAVRMIKQRLSL</sequence>
<protein>
    <recommendedName>
        <fullName>Thymidylate kinase</fullName>
        <ecNumber>2.7.4.9</ecNumber>
    </recommendedName>
</protein>
<reference key="1">
    <citation type="journal article" date="2000" name="Nucleic Acids Res.">
        <title>Complete genome sequence of the alkaliphilic bacterium Bacillus halodurans and genomic sequence comparison with Bacillus subtilis.</title>
        <authorList>
            <person name="Takami H."/>
            <person name="Nakasone K."/>
            <person name="Takaki Y."/>
            <person name="Maeno G."/>
            <person name="Sasaki R."/>
            <person name="Masui N."/>
            <person name="Fuji F."/>
            <person name="Hirama C."/>
            <person name="Nakamura Y."/>
            <person name="Ogasawara N."/>
            <person name="Kuhara S."/>
            <person name="Horikoshi K."/>
        </authorList>
    </citation>
    <scope>NUCLEOTIDE SEQUENCE [LARGE SCALE GENOMIC DNA]</scope>
    <source>
        <strain>ATCC BAA-125 / DSM 18197 / FERM 7344 / JCM 9153 / C-125</strain>
    </source>
</reference>
<gene>
    <name type="primary">tmk</name>
    <name type="ordered locus">BH0042</name>
</gene>
<comment type="function">
    <text evidence="1">Phosphorylation of dTMP to form dTDP in both de novo and salvage pathways of dTTP synthesis.</text>
</comment>
<comment type="catalytic activity">
    <reaction>
        <text>dTMP + ATP = dTDP + ADP</text>
        <dbReference type="Rhea" id="RHEA:13517"/>
        <dbReference type="ChEBI" id="CHEBI:30616"/>
        <dbReference type="ChEBI" id="CHEBI:58369"/>
        <dbReference type="ChEBI" id="CHEBI:63528"/>
        <dbReference type="ChEBI" id="CHEBI:456216"/>
        <dbReference type="EC" id="2.7.4.9"/>
    </reaction>
</comment>
<comment type="similarity">
    <text evidence="3">Belongs to the thymidylate kinase family.</text>
</comment>
<dbReference type="EC" id="2.7.4.9"/>
<dbReference type="EMBL" id="BA000004">
    <property type="protein sequence ID" value="BAB03761.1"/>
    <property type="molecule type" value="Genomic_DNA"/>
</dbReference>
<dbReference type="PIR" id="B83655">
    <property type="entry name" value="B83655"/>
</dbReference>
<dbReference type="RefSeq" id="WP_010896226.1">
    <property type="nucleotide sequence ID" value="NC_002570.2"/>
</dbReference>
<dbReference type="SMR" id="Q9KGL9"/>
<dbReference type="STRING" id="272558.gene:10725864"/>
<dbReference type="KEGG" id="bha:BH0042"/>
<dbReference type="eggNOG" id="COG0125">
    <property type="taxonomic scope" value="Bacteria"/>
</dbReference>
<dbReference type="HOGENOM" id="CLU_049131_0_2_9"/>
<dbReference type="OrthoDB" id="9774907at2"/>
<dbReference type="Proteomes" id="UP000001258">
    <property type="component" value="Chromosome"/>
</dbReference>
<dbReference type="GO" id="GO:0005829">
    <property type="term" value="C:cytosol"/>
    <property type="evidence" value="ECO:0007669"/>
    <property type="project" value="TreeGrafter"/>
</dbReference>
<dbReference type="GO" id="GO:0005524">
    <property type="term" value="F:ATP binding"/>
    <property type="evidence" value="ECO:0007669"/>
    <property type="project" value="UniProtKB-UniRule"/>
</dbReference>
<dbReference type="GO" id="GO:0004798">
    <property type="term" value="F:dTMP kinase activity"/>
    <property type="evidence" value="ECO:0007669"/>
    <property type="project" value="UniProtKB-UniRule"/>
</dbReference>
<dbReference type="GO" id="GO:0006233">
    <property type="term" value="P:dTDP biosynthetic process"/>
    <property type="evidence" value="ECO:0007669"/>
    <property type="project" value="InterPro"/>
</dbReference>
<dbReference type="GO" id="GO:0006235">
    <property type="term" value="P:dTTP biosynthetic process"/>
    <property type="evidence" value="ECO:0007669"/>
    <property type="project" value="UniProtKB-UniRule"/>
</dbReference>
<dbReference type="GO" id="GO:0006227">
    <property type="term" value="P:dUDP biosynthetic process"/>
    <property type="evidence" value="ECO:0007669"/>
    <property type="project" value="TreeGrafter"/>
</dbReference>
<dbReference type="CDD" id="cd01672">
    <property type="entry name" value="TMPK"/>
    <property type="match status" value="1"/>
</dbReference>
<dbReference type="FunFam" id="3.40.50.300:FF:000225">
    <property type="entry name" value="Thymidylate kinase"/>
    <property type="match status" value="1"/>
</dbReference>
<dbReference type="Gene3D" id="3.40.50.300">
    <property type="entry name" value="P-loop containing nucleotide triphosphate hydrolases"/>
    <property type="match status" value="1"/>
</dbReference>
<dbReference type="HAMAP" id="MF_00165">
    <property type="entry name" value="Thymidylate_kinase"/>
    <property type="match status" value="1"/>
</dbReference>
<dbReference type="InterPro" id="IPR027417">
    <property type="entry name" value="P-loop_NTPase"/>
</dbReference>
<dbReference type="InterPro" id="IPR039430">
    <property type="entry name" value="Thymidylate_kin-like_dom"/>
</dbReference>
<dbReference type="InterPro" id="IPR018095">
    <property type="entry name" value="Thymidylate_kin_CS"/>
</dbReference>
<dbReference type="InterPro" id="IPR018094">
    <property type="entry name" value="Thymidylate_kinase"/>
</dbReference>
<dbReference type="NCBIfam" id="TIGR00041">
    <property type="entry name" value="DTMP_kinase"/>
    <property type="match status" value="1"/>
</dbReference>
<dbReference type="PANTHER" id="PTHR10344">
    <property type="entry name" value="THYMIDYLATE KINASE"/>
    <property type="match status" value="1"/>
</dbReference>
<dbReference type="PANTHER" id="PTHR10344:SF4">
    <property type="entry name" value="UMP-CMP KINASE 2, MITOCHONDRIAL"/>
    <property type="match status" value="1"/>
</dbReference>
<dbReference type="Pfam" id="PF02223">
    <property type="entry name" value="Thymidylate_kin"/>
    <property type="match status" value="1"/>
</dbReference>
<dbReference type="SUPFAM" id="SSF52540">
    <property type="entry name" value="P-loop containing nucleoside triphosphate hydrolases"/>
    <property type="match status" value="1"/>
</dbReference>
<dbReference type="PROSITE" id="PS01331">
    <property type="entry name" value="THYMIDYLATE_KINASE"/>
    <property type="match status" value="1"/>
</dbReference>
<keyword id="KW-0067">ATP-binding</keyword>
<keyword id="KW-0418">Kinase</keyword>
<keyword id="KW-0545">Nucleotide biosynthesis</keyword>
<keyword id="KW-0547">Nucleotide-binding</keyword>
<keyword id="KW-1185">Reference proteome</keyword>
<keyword id="KW-0808">Transferase</keyword>